<gene>
    <name evidence="2" type="primary">tuf1</name>
    <name type="ordered locus">YPTB0276</name>
</gene>
<accession>Q66FQ9</accession>
<reference key="1">
    <citation type="journal article" date="2004" name="Proc. Natl. Acad. Sci. U.S.A.">
        <title>Insights into the evolution of Yersinia pestis through whole-genome comparison with Yersinia pseudotuberculosis.</title>
        <authorList>
            <person name="Chain P.S.G."/>
            <person name="Carniel E."/>
            <person name="Larimer F.W."/>
            <person name="Lamerdin J."/>
            <person name="Stoutland P.O."/>
            <person name="Regala W.M."/>
            <person name="Georgescu A.M."/>
            <person name="Vergez L.M."/>
            <person name="Land M.L."/>
            <person name="Motin V.L."/>
            <person name="Brubaker R.R."/>
            <person name="Fowler J."/>
            <person name="Hinnebusch J."/>
            <person name="Marceau M."/>
            <person name="Medigue C."/>
            <person name="Simonet M."/>
            <person name="Chenal-Francisque V."/>
            <person name="Souza B."/>
            <person name="Dacheux D."/>
            <person name="Elliott J.M."/>
            <person name="Derbise A."/>
            <person name="Hauser L.J."/>
            <person name="Garcia E."/>
        </authorList>
    </citation>
    <scope>NUCLEOTIDE SEQUENCE [LARGE SCALE GENOMIC DNA]</scope>
    <source>
        <strain>IP32953</strain>
    </source>
</reference>
<proteinExistence type="inferred from homology"/>
<organism>
    <name type="scientific">Yersinia pseudotuberculosis serotype I (strain IP32953)</name>
    <dbReference type="NCBI Taxonomy" id="273123"/>
    <lineage>
        <taxon>Bacteria</taxon>
        <taxon>Pseudomonadati</taxon>
        <taxon>Pseudomonadota</taxon>
        <taxon>Gammaproteobacteria</taxon>
        <taxon>Enterobacterales</taxon>
        <taxon>Yersiniaceae</taxon>
        <taxon>Yersinia</taxon>
    </lineage>
</organism>
<evidence type="ECO:0000250" key="1"/>
<evidence type="ECO:0000255" key="2">
    <source>
        <dbReference type="HAMAP-Rule" id="MF_00118"/>
    </source>
</evidence>
<dbReference type="EC" id="3.6.5.3" evidence="2"/>
<dbReference type="EMBL" id="BX936398">
    <property type="protein sequence ID" value="CAH19516.1"/>
    <property type="molecule type" value="Genomic_DNA"/>
</dbReference>
<dbReference type="SMR" id="Q66FQ9"/>
<dbReference type="KEGG" id="ypo:BZ17_2298"/>
<dbReference type="KEGG" id="yps:YPTB0276"/>
<dbReference type="PATRIC" id="fig|273123.14.peg.2430"/>
<dbReference type="Proteomes" id="UP000001011">
    <property type="component" value="Chromosome"/>
</dbReference>
<dbReference type="GO" id="GO:0005829">
    <property type="term" value="C:cytosol"/>
    <property type="evidence" value="ECO:0007669"/>
    <property type="project" value="TreeGrafter"/>
</dbReference>
<dbReference type="GO" id="GO:0005525">
    <property type="term" value="F:GTP binding"/>
    <property type="evidence" value="ECO:0007669"/>
    <property type="project" value="UniProtKB-UniRule"/>
</dbReference>
<dbReference type="GO" id="GO:0003924">
    <property type="term" value="F:GTPase activity"/>
    <property type="evidence" value="ECO:0007669"/>
    <property type="project" value="InterPro"/>
</dbReference>
<dbReference type="GO" id="GO:0097216">
    <property type="term" value="F:guanosine tetraphosphate binding"/>
    <property type="evidence" value="ECO:0007669"/>
    <property type="project" value="UniProtKB-ARBA"/>
</dbReference>
<dbReference type="GO" id="GO:0003746">
    <property type="term" value="F:translation elongation factor activity"/>
    <property type="evidence" value="ECO:0007669"/>
    <property type="project" value="UniProtKB-UniRule"/>
</dbReference>
<dbReference type="CDD" id="cd01884">
    <property type="entry name" value="EF_Tu"/>
    <property type="match status" value="1"/>
</dbReference>
<dbReference type="CDD" id="cd03697">
    <property type="entry name" value="EFTU_II"/>
    <property type="match status" value="1"/>
</dbReference>
<dbReference type="CDD" id="cd03707">
    <property type="entry name" value="EFTU_III"/>
    <property type="match status" value="1"/>
</dbReference>
<dbReference type="FunFam" id="2.40.30.10:FF:000001">
    <property type="entry name" value="Elongation factor Tu"/>
    <property type="match status" value="1"/>
</dbReference>
<dbReference type="FunFam" id="3.40.50.300:FF:000003">
    <property type="entry name" value="Elongation factor Tu"/>
    <property type="match status" value="1"/>
</dbReference>
<dbReference type="Gene3D" id="3.40.50.300">
    <property type="entry name" value="P-loop containing nucleotide triphosphate hydrolases"/>
    <property type="match status" value="1"/>
</dbReference>
<dbReference type="Gene3D" id="2.40.30.10">
    <property type="entry name" value="Translation factors"/>
    <property type="match status" value="2"/>
</dbReference>
<dbReference type="HAMAP" id="MF_00118_B">
    <property type="entry name" value="EF_Tu_B"/>
    <property type="match status" value="1"/>
</dbReference>
<dbReference type="InterPro" id="IPR041709">
    <property type="entry name" value="EF-Tu_GTP-bd"/>
</dbReference>
<dbReference type="InterPro" id="IPR050055">
    <property type="entry name" value="EF-Tu_GTPase"/>
</dbReference>
<dbReference type="InterPro" id="IPR004161">
    <property type="entry name" value="EFTu-like_2"/>
</dbReference>
<dbReference type="InterPro" id="IPR033720">
    <property type="entry name" value="EFTU_2"/>
</dbReference>
<dbReference type="InterPro" id="IPR031157">
    <property type="entry name" value="G_TR_CS"/>
</dbReference>
<dbReference type="InterPro" id="IPR027417">
    <property type="entry name" value="P-loop_NTPase"/>
</dbReference>
<dbReference type="InterPro" id="IPR005225">
    <property type="entry name" value="Small_GTP-bd"/>
</dbReference>
<dbReference type="InterPro" id="IPR000795">
    <property type="entry name" value="T_Tr_GTP-bd_dom"/>
</dbReference>
<dbReference type="InterPro" id="IPR009000">
    <property type="entry name" value="Transl_B-barrel_sf"/>
</dbReference>
<dbReference type="InterPro" id="IPR009001">
    <property type="entry name" value="Transl_elong_EF1A/Init_IF2_C"/>
</dbReference>
<dbReference type="InterPro" id="IPR004541">
    <property type="entry name" value="Transl_elong_EFTu/EF1A_bac/org"/>
</dbReference>
<dbReference type="InterPro" id="IPR004160">
    <property type="entry name" value="Transl_elong_EFTu/EF1A_C"/>
</dbReference>
<dbReference type="NCBIfam" id="TIGR00485">
    <property type="entry name" value="EF-Tu"/>
    <property type="match status" value="1"/>
</dbReference>
<dbReference type="NCBIfam" id="NF000766">
    <property type="entry name" value="PRK00049.1"/>
    <property type="match status" value="1"/>
</dbReference>
<dbReference type="NCBIfam" id="NF009372">
    <property type="entry name" value="PRK12735.1"/>
    <property type="match status" value="1"/>
</dbReference>
<dbReference type="NCBIfam" id="NF009373">
    <property type="entry name" value="PRK12736.1"/>
    <property type="match status" value="1"/>
</dbReference>
<dbReference type="NCBIfam" id="TIGR00231">
    <property type="entry name" value="small_GTP"/>
    <property type="match status" value="1"/>
</dbReference>
<dbReference type="PANTHER" id="PTHR43721:SF22">
    <property type="entry name" value="ELONGATION FACTOR TU, MITOCHONDRIAL"/>
    <property type="match status" value="1"/>
</dbReference>
<dbReference type="PANTHER" id="PTHR43721">
    <property type="entry name" value="ELONGATION FACTOR TU-RELATED"/>
    <property type="match status" value="1"/>
</dbReference>
<dbReference type="Pfam" id="PF00009">
    <property type="entry name" value="GTP_EFTU"/>
    <property type="match status" value="1"/>
</dbReference>
<dbReference type="Pfam" id="PF03144">
    <property type="entry name" value="GTP_EFTU_D2"/>
    <property type="match status" value="1"/>
</dbReference>
<dbReference type="Pfam" id="PF03143">
    <property type="entry name" value="GTP_EFTU_D3"/>
    <property type="match status" value="1"/>
</dbReference>
<dbReference type="PRINTS" id="PR00315">
    <property type="entry name" value="ELONGATNFCT"/>
</dbReference>
<dbReference type="SUPFAM" id="SSF50465">
    <property type="entry name" value="EF-Tu/eEF-1alpha/eIF2-gamma C-terminal domain"/>
    <property type="match status" value="1"/>
</dbReference>
<dbReference type="SUPFAM" id="SSF52540">
    <property type="entry name" value="P-loop containing nucleoside triphosphate hydrolases"/>
    <property type="match status" value="1"/>
</dbReference>
<dbReference type="SUPFAM" id="SSF50447">
    <property type="entry name" value="Translation proteins"/>
    <property type="match status" value="1"/>
</dbReference>
<dbReference type="PROSITE" id="PS00301">
    <property type="entry name" value="G_TR_1"/>
    <property type="match status" value="1"/>
</dbReference>
<dbReference type="PROSITE" id="PS51722">
    <property type="entry name" value="G_TR_2"/>
    <property type="match status" value="1"/>
</dbReference>
<keyword id="KW-0963">Cytoplasm</keyword>
<keyword id="KW-0251">Elongation factor</keyword>
<keyword id="KW-0342">GTP-binding</keyword>
<keyword id="KW-0378">Hydrolase</keyword>
<keyword id="KW-0460">Magnesium</keyword>
<keyword id="KW-0479">Metal-binding</keyword>
<keyword id="KW-0547">Nucleotide-binding</keyword>
<keyword id="KW-0648">Protein biosynthesis</keyword>
<sequence length="394" mass="43170">MSKEKFERTKPHVNVGTIGHVDHGKTTLTAAITTVLAKTYGGSARAFDQIDNAPEEKARGITINTSHVEYDTPARHYAHVDCPGHADYVKNMITGAAQMDGAILVVAATDGPMPQTREHILLGRQVGVPYIIVFLNKCDMVDDEELLELVEMEVRELLSQYDFPGDDTPVIRGSALKALEGDAEWEAKIIELAEALDSYIPQPERAIDRPFLLPIEDVFSISGRGTVVTGRVERGIVKVGEEVEIVGIIDTIKTTCTGVEMFRKLLDEGRAGENVGVLLRGTKRDDVQRGQVLAKPGSIKPHTKFESEVYILSKDEGGRHTPFFKGYRPQFYFRTTDVTGTIELPEGVEMVMPGDNVNMVVNLIAPIAMDDGLRFAIREGGRTVGAGVVAKVIE</sequence>
<feature type="chain" id="PRO_0000337589" description="Elongation factor Tu 1">
    <location>
        <begin position="1"/>
        <end position="394"/>
    </location>
</feature>
<feature type="domain" description="tr-type G">
    <location>
        <begin position="10"/>
        <end position="204"/>
    </location>
</feature>
<feature type="region of interest" description="G1" evidence="1">
    <location>
        <begin position="19"/>
        <end position="26"/>
    </location>
</feature>
<feature type="region of interest" description="G2" evidence="1">
    <location>
        <begin position="60"/>
        <end position="64"/>
    </location>
</feature>
<feature type="region of interest" description="G3" evidence="1">
    <location>
        <begin position="81"/>
        <end position="84"/>
    </location>
</feature>
<feature type="region of interest" description="G4" evidence="1">
    <location>
        <begin position="136"/>
        <end position="139"/>
    </location>
</feature>
<feature type="region of interest" description="G5" evidence="1">
    <location>
        <begin position="174"/>
        <end position="176"/>
    </location>
</feature>
<feature type="binding site" evidence="2">
    <location>
        <begin position="19"/>
        <end position="26"/>
    </location>
    <ligand>
        <name>GTP</name>
        <dbReference type="ChEBI" id="CHEBI:37565"/>
    </ligand>
</feature>
<feature type="binding site" evidence="2">
    <location>
        <position position="26"/>
    </location>
    <ligand>
        <name>Mg(2+)</name>
        <dbReference type="ChEBI" id="CHEBI:18420"/>
    </ligand>
</feature>
<feature type="binding site" evidence="2">
    <location>
        <begin position="81"/>
        <end position="85"/>
    </location>
    <ligand>
        <name>GTP</name>
        <dbReference type="ChEBI" id="CHEBI:37565"/>
    </ligand>
</feature>
<feature type="binding site" evidence="2">
    <location>
        <begin position="136"/>
        <end position="139"/>
    </location>
    <ligand>
        <name>GTP</name>
        <dbReference type="ChEBI" id="CHEBI:37565"/>
    </ligand>
</feature>
<comment type="function">
    <text evidence="2">GTP hydrolase that promotes the GTP-dependent binding of aminoacyl-tRNA to the A-site of ribosomes during protein biosynthesis.</text>
</comment>
<comment type="catalytic activity">
    <reaction evidence="2">
        <text>GTP + H2O = GDP + phosphate + H(+)</text>
        <dbReference type="Rhea" id="RHEA:19669"/>
        <dbReference type="ChEBI" id="CHEBI:15377"/>
        <dbReference type="ChEBI" id="CHEBI:15378"/>
        <dbReference type="ChEBI" id="CHEBI:37565"/>
        <dbReference type="ChEBI" id="CHEBI:43474"/>
        <dbReference type="ChEBI" id="CHEBI:58189"/>
        <dbReference type="EC" id="3.6.5.3"/>
    </reaction>
    <physiologicalReaction direction="left-to-right" evidence="2">
        <dbReference type="Rhea" id="RHEA:19670"/>
    </physiologicalReaction>
</comment>
<comment type="subunit">
    <text evidence="2">Monomer.</text>
</comment>
<comment type="subcellular location">
    <subcellularLocation>
        <location evidence="2">Cytoplasm</location>
    </subcellularLocation>
</comment>
<comment type="similarity">
    <text evidence="2">Belongs to the TRAFAC class translation factor GTPase superfamily. Classic translation factor GTPase family. EF-Tu/EF-1A subfamily.</text>
</comment>
<protein>
    <recommendedName>
        <fullName evidence="2">Elongation factor Tu 1</fullName>
        <shortName evidence="2">EF-Tu 1</shortName>
        <ecNumber evidence="2">3.6.5.3</ecNumber>
    </recommendedName>
</protein>
<name>EFTU1_YERPS</name>